<accession>Q92SH5</accession>
<gene>
    <name evidence="1" type="primary">fmt</name>
    <name type="ordered locus">R00420</name>
    <name type="ORF">SMc01100</name>
</gene>
<feature type="chain" id="PRO_0000083022" description="Methionyl-tRNA formyltransferase">
    <location>
        <begin position="1"/>
        <end position="311"/>
    </location>
</feature>
<feature type="binding site" evidence="1">
    <location>
        <begin position="112"/>
        <end position="115"/>
    </location>
    <ligand>
        <name>(6S)-5,6,7,8-tetrahydrofolate</name>
        <dbReference type="ChEBI" id="CHEBI:57453"/>
    </ligand>
</feature>
<keyword id="KW-0648">Protein biosynthesis</keyword>
<keyword id="KW-1185">Reference proteome</keyword>
<keyword id="KW-0808">Transferase</keyword>
<dbReference type="EC" id="2.1.2.9" evidence="1"/>
<dbReference type="EMBL" id="AL591688">
    <property type="protein sequence ID" value="CAC41857.1"/>
    <property type="molecule type" value="Genomic_DNA"/>
</dbReference>
<dbReference type="RefSeq" id="NP_384526.1">
    <property type="nucleotide sequence ID" value="NC_003047.1"/>
</dbReference>
<dbReference type="RefSeq" id="WP_010968562.1">
    <property type="nucleotide sequence ID" value="NC_003047.1"/>
</dbReference>
<dbReference type="SMR" id="Q92SH5"/>
<dbReference type="EnsemblBacteria" id="CAC41857">
    <property type="protein sequence ID" value="CAC41857"/>
    <property type="gene ID" value="SMc01100"/>
</dbReference>
<dbReference type="KEGG" id="sme:SMc01100"/>
<dbReference type="PATRIC" id="fig|266834.11.peg.1793"/>
<dbReference type="eggNOG" id="COG0223">
    <property type="taxonomic scope" value="Bacteria"/>
</dbReference>
<dbReference type="HOGENOM" id="CLU_033347_1_2_5"/>
<dbReference type="OrthoDB" id="9802815at2"/>
<dbReference type="Proteomes" id="UP000001976">
    <property type="component" value="Chromosome"/>
</dbReference>
<dbReference type="GO" id="GO:0005829">
    <property type="term" value="C:cytosol"/>
    <property type="evidence" value="ECO:0007669"/>
    <property type="project" value="TreeGrafter"/>
</dbReference>
<dbReference type="GO" id="GO:0004479">
    <property type="term" value="F:methionyl-tRNA formyltransferase activity"/>
    <property type="evidence" value="ECO:0007669"/>
    <property type="project" value="UniProtKB-UniRule"/>
</dbReference>
<dbReference type="CDD" id="cd08646">
    <property type="entry name" value="FMT_core_Met-tRNA-FMT_N"/>
    <property type="match status" value="1"/>
</dbReference>
<dbReference type="CDD" id="cd08704">
    <property type="entry name" value="Met_tRNA_FMT_C"/>
    <property type="match status" value="1"/>
</dbReference>
<dbReference type="Gene3D" id="3.40.50.12230">
    <property type="match status" value="1"/>
</dbReference>
<dbReference type="HAMAP" id="MF_00182">
    <property type="entry name" value="Formyl_trans"/>
    <property type="match status" value="1"/>
</dbReference>
<dbReference type="InterPro" id="IPR005794">
    <property type="entry name" value="Fmt"/>
</dbReference>
<dbReference type="InterPro" id="IPR005793">
    <property type="entry name" value="Formyl_trans_C"/>
</dbReference>
<dbReference type="InterPro" id="IPR002376">
    <property type="entry name" value="Formyl_transf_N"/>
</dbReference>
<dbReference type="InterPro" id="IPR036477">
    <property type="entry name" value="Formyl_transf_N_sf"/>
</dbReference>
<dbReference type="InterPro" id="IPR011034">
    <property type="entry name" value="Formyl_transferase-like_C_sf"/>
</dbReference>
<dbReference type="InterPro" id="IPR001555">
    <property type="entry name" value="GART_AS"/>
</dbReference>
<dbReference type="InterPro" id="IPR044135">
    <property type="entry name" value="Met-tRNA-FMT_C"/>
</dbReference>
<dbReference type="InterPro" id="IPR041711">
    <property type="entry name" value="Met-tRNA-FMT_N"/>
</dbReference>
<dbReference type="NCBIfam" id="TIGR00460">
    <property type="entry name" value="fmt"/>
    <property type="match status" value="1"/>
</dbReference>
<dbReference type="PANTHER" id="PTHR11138">
    <property type="entry name" value="METHIONYL-TRNA FORMYLTRANSFERASE"/>
    <property type="match status" value="1"/>
</dbReference>
<dbReference type="PANTHER" id="PTHR11138:SF5">
    <property type="entry name" value="METHIONYL-TRNA FORMYLTRANSFERASE, MITOCHONDRIAL"/>
    <property type="match status" value="1"/>
</dbReference>
<dbReference type="Pfam" id="PF02911">
    <property type="entry name" value="Formyl_trans_C"/>
    <property type="match status" value="1"/>
</dbReference>
<dbReference type="Pfam" id="PF00551">
    <property type="entry name" value="Formyl_trans_N"/>
    <property type="match status" value="1"/>
</dbReference>
<dbReference type="SUPFAM" id="SSF50486">
    <property type="entry name" value="FMT C-terminal domain-like"/>
    <property type="match status" value="1"/>
</dbReference>
<dbReference type="SUPFAM" id="SSF53328">
    <property type="entry name" value="Formyltransferase"/>
    <property type="match status" value="1"/>
</dbReference>
<dbReference type="PROSITE" id="PS00373">
    <property type="entry name" value="GART"/>
    <property type="match status" value="1"/>
</dbReference>
<comment type="function">
    <text evidence="1">Attaches a formyl group to the free amino group of methionyl-tRNA(fMet). The formyl group appears to play a dual role in the initiator identity of N-formylmethionyl-tRNA by promoting its recognition by IF2 and preventing the misappropriation of this tRNA by the elongation apparatus.</text>
</comment>
<comment type="catalytic activity">
    <reaction evidence="1">
        <text>L-methionyl-tRNA(fMet) + (6R)-10-formyltetrahydrofolate = N-formyl-L-methionyl-tRNA(fMet) + (6S)-5,6,7,8-tetrahydrofolate + H(+)</text>
        <dbReference type="Rhea" id="RHEA:24380"/>
        <dbReference type="Rhea" id="RHEA-COMP:9952"/>
        <dbReference type="Rhea" id="RHEA-COMP:9953"/>
        <dbReference type="ChEBI" id="CHEBI:15378"/>
        <dbReference type="ChEBI" id="CHEBI:57453"/>
        <dbReference type="ChEBI" id="CHEBI:78530"/>
        <dbReference type="ChEBI" id="CHEBI:78844"/>
        <dbReference type="ChEBI" id="CHEBI:195366"/>
        <dbReference type="EC" id="2.1.2.9"/>
    </reaction>
</comment>
<comment type="similarity">
    <text evidence="1">Belongs to the Fmt family.</text>
</comment>
<protein>
    <recommendedName>
        <fullName evidence="1">Methionyl-tRNA formyltransferase</fullName>
        <ecNumber evidence="1">2.1.2.9</ecNumber>
    </recommendedName>
</protein>
<organism>
    <name type="scientific">Rhizobium meliloti (strain 1021)</name>
    <name type="common">Ensifer meliloti</name>
    <name type="synonym">Sinorhizobium meliloti</name>
    <dbReference type="NCBI Taxonomy" id="266834"/>
    <lineage>
        <taxon>Bacteria</taxon>
        <taxon>Pseudomonadati</taxon>
        <taxon>Pseudomonadota</taxon>
        <taxon>Alphaproteobacteria</taxon>
        <taxon>Hyphomicrobiales</taxon>
        <taxon>Rhizobiaceae</taxon>
        <taxon>Sinorhizobium/Ensifer group</taxon>
        <taxon>Sinorhizobium</taxon>
    </lineage>
</organism>
<name>FMT_RHIME</name>
<reference key="1">
    <citation type="journal article" date="2001" name="Proc. Natl. Acad. Sci. U.S.A.">
        <title>Analysis of the chromosome sequence of the legume symbiont Sinorhizobium meliloti strain 1021.</title>
        <authorList>
            <person name="Capela D."/>
            <person name="Barloy-Hubler F."/>
            <person name="Gouzy J."/>
            <person name="Bothe G."/>
            <person name="Ampe F."/>
            <person name="Batut J."/>
            <person name="Boistard P."/>
            <person name="Becker A."/>
            <person name="Boutry M."/>
            <person name="Cadieu E."/>
            <person name="Dreano S."/>
            <person name="Gloux S."/>
            <person name="Godrie T."/>
            <person name="Goffeau A."/>
            <person name="Kahn D."/>
            <person name="Kiss E."/>
            <person name="Lelaure V."/>
            <person name="Masuy D."/>
            <person name="Pohl T."/>
            <person name="Portetelle D."/>
            <person name="Puehler A."/>
            <person name="Purnelle B."/>
            <person name="Ramsperger U."/>
            <person name="Renard C."/>
            <person name="Thebault P."/>
            <person name="Vandenbol M."/>
            <person name="Weidner S."/>
            <person name="Galibert F."/>
        </authorList>
    </citation>
    <scope>NUCLEOTIDE SEQUENCE [LARGE SCALE GENOMIC DNA]</scope>
    <source>
        <strain>1021</strain>
    </source>
</reference>
<reference key="2">
    <citation type="journal article" date="2001" name="Science">
        <title>The composite genome of the legume symbiont Sinorhizobium meliloti.</title>
        <authorList>
            <person name="Galibert F."/>
            <person name="Finan T.M."/>
            <person name="Long S.R."/>
            <person name="Puehler A."/>
            <person name="Abola P."/>
            <person name="Ampe F."/>
            <person name="Barloy-Hubler F."/>
            <person name="Barnett M.J."/>
            <person name="Becker A."/>
            <person name="Boistard P."/>
            <person name="Bothe G."/>
            <person name="Boutry M."/>
            <person name="Bowser L."/>
            <person name="Buhrmester J."/>
            <person name="Cadieu E."/>
            <person name="Capela D."/>
            <person name="Chain P."/>
            <person name="Cowie A."/>
            <person name="Davis R.W."/>
            <person name="Dreano S."/>
            <person name="Federspiel N.A."/>
            <person name="Fisher R.F."/>
            <person name="Gloux S."/>
            <person name="Godrie T."/>
            <person name="Goffeau A."/>
            <person name="Golding B."/>
            <person name="Gouzy J."/>
            <person name="Gurjal M."/>
            <person name="Hernandez-Lucas I."/>
            <person name="Hong A."/>
            <person name="Huizar L."/>
            <person name="Hyman R.W."/>
            <person name="Jones T."/>
            <person name="Kahn D."/>
            <person name="Kahn M.L."/>
            <person name="Kalman S."/>
            <person name="Keating D.H."/>
            <person name="Kiss E."/>
            <person name="Komp C."/>
            <person name="Lelaure V."/>
            <person name="Masuy D."/>
            <person name="Palm C."/>
            <person name="Peck M.C."/>
            <person name="Pohl T.M."/>
            <person name="Portetelle D."/>
            <person name="Purnelle B."/>
            <person name="Ramsperger U."/>
            <person name="Surzycki R."/>
            <person name="Thebault P."/>
            <person name="Vandenbol M."/>
            <person name="Vorhoelter F.J."/>
            <person name="Weidner S."/>
            <person name="Wells D.H."/>
            <person name="Wong K."/>
            <person name="Yeh K.-C."/>
            <person name="Batut J."/>
        </authorList>
    </citation>
    <scope>NUCLEOTIDE SEQUENCE [LARGE SCALE GENOMIC DNA]</scope>
    <source>
        <strain>1021</strain>
    </source>
</reference>
<evidence type="ECO:0000255" key="1">
    <source>
        <dbReference type="HAMAP-Rule" id="MF_00182"/>
    </source>
</evidence>
<proteinExistence type="inferred from homology"/>
<sequence>MPLRMIFMGTPEFSVPTLLALAGAGHEIAAVYTQPPRPGGRRGLDLQKSPVHQAAERLGIPVLTPANFKDAADRQTFRDFGADVAVVVAYGLLLPEEILSGTRYGCYNGHASLLPRWRGAAPIQRAIMAGDRETGMMVMKMDKGLDTGPVALAQSVPIDGMMRAGELHDRLMQVGAVLMTEAMARLESGELPLAPQAQEGVAYAAKISKEETRIDFSRPAAEVHNHIRGLSPFPGAWFELDIAGRRERVKVLASEMSEGEGDPGEVLDHTLGIACGEGAVRLTRLQRAGGKALAAADFLRGTPIAAGARIA</sequence>